<name>SYL_PSEA6</name>
<accession>Q15VK0</accession>
<keyword id="KW-0030">Aminoacyl-tRNA synthetase</keyword>
<keyword id="KW-0067">ATP-binding</keyword>
<keyword id="KW-0963">Cytoplasm</keyword>
<keyword id="KW-0436">Ligase</keyword>
<keyword id="KW-0547">Nucleotide-binding</keyword>
<keyword id="KW-0648">Protein biosynthesis</keyword>
<gene>
    <name evidence="1" type="primary">leuS</name>
    <name type="ordered locus">Patl_1566</name>
</gene>
<sequence length="870" mass="98121">MAEKIYEPQKIEQEVQALWETNQTFKATEQEDKEKFYCLSMFPYPSGRLHMGHVRNYTIGDVVSRFQRMNGKNVLQPMGWDAFGLPAENAALNNNTAPAKWTYQNIDYMKNQLKSLGFGYDWDREVATCKKDYYRWEQWFFTRLYEKGLVYKKNSTVNWDPVDHTVLANEQVIDGRGWRSGALVEQKEIPQWFIKITDYAEELLTDLEQLEDWPEQVRAMQKNWIGRSEGVDITFNLSENAADISSFDVYTTRPDTLYGVTYVAVAAQHPLALHAAQTRPELAEFIESCKNTKVAEAELATMEKKGCDTGLFAIHPLTGEKVAVWVANFVLMGYGSGAVMSVPGHDQRDWEFAQKYGLPIKQVVEPSADEPQECDLTTAAYTDKGVLVNSAEFNGLAFQEAFDAIAAKLEALGAGSKKVNYRLRDWGVSRQRYWGSPIPMLNLENGESVPVPSDQLPVELPEDVQMNGVISPIKADPDWAKTEYNGQPALRETDTFDTFMESSWYYARYCSAQNQDAMLDPTQANYWLPVDQYVGGIEHAILHLLYSRFFHKLLRDEGLVNSDEPYKRLLCQGMVLADSFFREDESGKKEWFSPADVDTVKDEKGRITQATLKADGKPVEHGGMTKMSKSKNNGIDPQHVIDLYGADTIRVFTMFAAPPEQTLEWVDSGVEGANRFIKRVWKLTQDHIDALDGDTAPAIDKTALTGDQKTLRRAVHRTIAKVTDDVGRRQTFNTAVAAIMELLNSLQRAPQSTDQDKAVLREAIESVVLLLNPIAPHMCHILWHDLGHKNDIETAPWPAVDESALVEDEKLIIVQVNGKVRSKITVAADASQEEVQALGLAQENVQQFVDGKTIRKVIYIAGKLLNIVAN</sequence>
<reference key="1">
    <citation type="submission" date="2006-06" db="EMBL/GenBank/DDBJ databases">
        <title>Complete sequence of Pseudoalteromonas atlantica T6c.</title>
        <authorList>
            <consortium name="US DOE Joint Genome Institute"/>
            <person name="Copeland A."/>
            <person name="Lucas S."/>
            <person name="Lapidus A."/>
            <person name="Barry K."/>
            <person name="Detter J.C."/>
            <person name="Glavina del Rio T."/>
            <person name="Hammon N."/>
            <person name="Israni S."/>
            <person name="Dalin E."/>
            <person name="Tice H."/>
            <person name="Pitluck S."/>
            <person name="Saunders E."/>
            <person name="Brettin T."/>
            <person name="Bruce D."/>
            <person name="Han C."/>
            <person name="Tapia R."/>
            <person name="Gilna P."/>
            <person name="Schmutz J."/>
            <person name="Larimer F."/>
            <person name="Land M."/>
            <person name="Hauser L."/>
            <person name="Kyrpides N."/>
            <person name="Kim E."/>
            <person name="Karls A.C."/>
            <person name="Bartlett D."/>
            <person name="Higgins B.P."/>
            <person name="Richardson P."/>
        </authorList>
    </citation>
    <scope>NUCLEOTIDE SEQUENCE [LARGE SCALE GENOMIC DNA]</scope>
    <source>
        <strain>T6c / ATCC BAA-1087</strain>
    </source>
</reference>
<proteinExistence type="inferred from homology"/>
<evidence type="ECO:0000255" key="1">
    <source>
        <dbReference type="HAMAP-Rule" id="MF_00049"/>
    </source>
</evidence>
<comment type="catalytic activity">
    <reaction evidence="1">
        <text>tRNA(Leu) + L-leucine + ATP = L-leucyl-tRNA(Leu) + AMP + diphosphate</text>
        <dbReference type="Rhea" id="RHEA:11688"/>
        <dbReference type="Rhea" id="RHEA-COMP:9613"/>
        <dbReference type="Rhea" id="RHEA-COMP:9622"/>
        <dbReference type="ChEBI" id="CHEBI:30616"/>
        <dbReference type="ChEBI" id="CHEBI:33019"/>
        <dbReference type="ChEBI" id="CHEBI:57427"/>
        <dbReference type="ChEBI" id="CHEBI:78442"/>
        <dbReference type="ChEBI" id="CHEBI:78494"/>
        <dbReference type="ChEBI" id="CHEBI:456215"/>
        <dbReference type="EC" id="6.1.1.4"/>
    </reaction>
</comment>
<comment type="subcellular location">
    <subcellularLocation>
        <location evidence="1">Cytoplasm</location>
    </subcellularLocation>
</comment>
<comment type="similarity">
    <text evidence="1">Belongs to the class-I aminoacyl-tRNA synthetase family.</text>
</comment>
<organism>
    <name type="scientific">Pseudoalteromonas atlantica (strain T6c / ATCC BAA-1087)</name>
    <dbReference type="NCBI Taxonomy" id="3042615"/>
    <lineage>
        <taxon>Bacteria</taxon>
        <taxon>Pseudomonadati</taxon>
        <taxon>Pseudomonadota</taxon>
        <taxon>Gammaproteobacteria</taxon>
        <taxon>Alteromonadales</taxon>
        <taxon>Alteromonadaceae</taxon>
        <taxon>Paraglaciecola</taxon>
    </lineage>
</organism>
<protein>
    <recommendedName>
        <fullName evidence="1">Leucine--tRNA ligase</fullName>
        <ecNumber evidence="1">6.1.1.4</ecNumber>
    </recommendedName>
    <alternativeName>
        <fullName evidence="1">Leucyl-tRNA synthetase</fullName>
        <shortName evidence="1">LeuRS</shortName>
    </alternativeName>
</protein>
<dbReference type="EC" id="6.1.1.4" evidence="1"/>
<dbReference type="EMBL" id="CP000388">
    <property type="protein sequence ID" value="ABG40088.1"/>
    <property type="molecule type" value="Genomic_DNA"/>
</dbReference>
<dbReference type="RefSeq" id="WP_011574402.1">
    <property type="nucleotide sequence ID" value="NC_008228.1"/>
</dbReference>
<dbReference type="SMR" id="Q15VK0"/>
<dbReference type="STRING" id="342610.Patl_1566"/>
<dbReference type="KEGG" id="pat:Patl_1566"/>
<dbReference type="eggNOG" id="COG0495">
    <property type="taxonomic scope" value="Bacteria"/>
</dbReference>
<dbReference type="HOGENOM" id="CLU_004427_0_0_6"/>
<dbReference type="OrthoDB" id="9810365at2"/>
<dbReference type="Proteomes" id="UP000001981">
    <property type="component" value="Chromosome"/>
</dbReference>
<dbReference type="GO" id="GO:0005829">
    <property type="term" value="C:cytosol"/>
    <property type="evidence" value="ECO:0007669"/>
    <property type="project" value="TreeGrafter"/>
</dbReference>
<dbReference type="GO" id="GO:0002161">
    <property type="term" value="F:aminoacyl-tRNA deacylase activity"/>
    <property type="evidence" value="ECO:0007669"/>
    <property type="project" value="InterPro"/>
</dbReference>
<dbReference type="GO" id="GO:0005524">
    <property type="term" value="F:ATP binding"/>
    <property type="evidence" value="ECO:0007669"/>
    <property type="project" value="UniProtKB-UniRule"/>
</dbReference>
<dbReference type="GO" id="GO:0004823">
    <property type="term" value="F:leucine-tRNA ligase activity"/>
    <property type="evidence" value="ECO:0007669"/>
    <property type="project" value="UniProtKB-UniRule"/>
</dbReference>
<dbReference type="GO" id="GO:0006429">
    <property type="term" value="P:leucyl-tRNA aminoacylation"/>
    <property type="evidence" value="ECO:0007669"/>
    <property type="project" value="UniProtKB-UniRule"/>
</dbReference>
<dbReference type="CDD" id="cd07958">
    <property type="entry name" value="Anticodon_Ia_Leu_BEm"/>
    <property type="match status" value="1"/>
</dbReference>
<dbReference type="CDD" id="cd00812">
    <property type="entry name" value="LeuRS_core"/>
    <property type="match status" value="1"/>
</dbReference>
<dbReference type="FunFam" id="1.10.730.10:FF:000003">
    <property type="entry name" value="Leucine--tRNA ligase"/>
    <property type="match status" value="1"/>
</dbReference>
<dbReference type="FunFam" id="2.20.28.290:FF:000001">
    <property type="entry name" value="Leucine--tRNA ligase"/>
    <property type="match status" value="1"/>
</dbReference>
<dbReference type="FunFam" id="3.10.20.590:FF:000001">
    <property type="entry name" value="Leucine--tRNA ligase"/>
    <property type="match status" value="1"/>
</dbReference>
<dbReference type="FunFam" id="3.40.50.620:FF:000003">
    <property type="entry name" value="Leucine--tRNA ligase"/>
    <property type="match status" value="1"/>
</dbReference>
<dbReference type="FunFam" id="3.40.50.620:FF:000124">
    <property type="entry name" value="Leucine--tRNA ligase"/>
    <property type="match status" value="1"/>
</dbReference>
<dbReference type="FunFam" id="3.90.740.10:FF:000012">
    <property type="entry name" value="Leucine--tRNA ligase"/>
    <property type="match status" value="1"/>
</dbReference>
<dbReference type="Gene3D" id="2.20.28.290">
    <property type="match status" value="1"/>
</dbReference>
<dbReference type="Gene3D" id="3.10.20.590">
    <property type="match status" value="1"/>
</dbReference>
<dbReference type="Gene3D" id="3.40.50.620">
    <property type="entry name" value="HUPs"/>
    <property type="match status" value="2"/>
</dbReference>
<dbReference type="Gene3D" id="1.10.730.10">
    <property type="entry name" value="Isoleucyl-tRNA Synthetase, Domain 1"/>
    <property type="match status" value="1"/>
</dbReference>
<dbReference type="HAMAP" id="MF_00049_B">
    <property type="entry name" value="Leu_tRNA_synth_B"/>
    <property type="match status" value="1"/>
</dbReference>
<dbReference type="InterPro" id="IPR001412">
    <property type="entry name" value="aa-tRNA-synth_I_CS"/>
</dbReference>
<dbReference type="InterPro" id="IPR002300">
    <property type="entry name" value="aa-tRNA-synth_Ia"/>
</dbReference>
<dbReference type="InterPro" id="IPR002302">
    <property type="entry name" value="Leu-tRNA-ligase"/>
</dbReference>
<dbReference type="InterPro" id="IPR025709">
    <property type="entry name" value="Leu_tRNA-synth_edit"/>
</dbReference>
<dbReference type="InterPro" id="IPR013155">
    <property type="entry name" value="M/V/L/I-tRNA-synth_anticd-bd"/>
</dbReference>
<dbReference type="InterPro" id="IPR015413">
    <property type="entry name" value="Methionyl/Leucyl_tRNA_Synth"/>
</dbReference>
<dbReference type="InterPro" id="IPR014729">
    <property type="entry name" value="Rossmann-like_a/b/a_fold"/>
</dbReference>
<dbReference type="InterPro" id="IPR009080">
    <property type="entry name" value="tRNAsynth_Ia_anticodon-bd"/>
</dbReference>
<dbReference type="InterPro" id="IPR009008">
    <property type="entry name" value="Val/Leu/Ile-tRNA-synth_edit"/>
</dbReference>
<dbReference type="NCBIfam" id="TIGR00396">
    <property type="entry name" value="leuS_bact"/>
    <property type="match status" value="1"/>
</dbReference>
<dbReference type="PANTHER" id="PTHR43740:SF2">
    <property type="entry name" value="LEUCINE--TRNA LIGASE, MITOCHONDRIAL"/>
    <property type="match status" value="1"/>
</dbReference>
<dbReference type="PANTHER" id="PTHR43740">
    <property type="entry name" value="LEUCYL-TRNA SYNTHETASE"/>
    <property type="match status" value="1"/>
</dbReference>
<dbReference type="Pfam" id="PF08264">
    <property type="entry name" value="Anticodon_1"/>
    <property type="match status" value="1"/>
</dbReference>
<dbReference type="Pfam" id="PF00133">
    <property type="entry name" value="tRNA-synt_1"/>
    <property type="match status" value="2"/>
</dbReference>
<dbReference type="Pfam" id="PF13603">
    <property type="entry name" value="tRNA-synt_1_2"/>
    <property type="match status" value="1"/>
</dbReference>
<dbReference type="Pfam" id="PF09334">
    <property type="entry name" value="tRNA-synt_1g"/>
    <property type="match status" value="1"/>
</dbReference>
<dbReference type="PRINTS" id="PR00985">
    <property type="entry name" value="TRNASYNTHLEU"/>
</dbReference>
<dbReference type="SUPFAM" id="SSF47323">
    <property type="entry name" value="Anticodon-binding domain of a subclass of class I aminoacyl-tRNA synthetases"/>
    <property type="match status" value="1"/>
</dbReference>
<dbReference type="SUPFAM" id="SSF52374">
    <property type="entry name" value="Nucleotidylyl transferase"/>
    <property type="match status" value="1"/>
</dbReference>
<dbReference type="SUPFAM" id="SSF50677">
    <property type="entry name" value="ValRS/IleRS/LeuRS editing domain"/>
    <property type="match status" value="1"/>
</dbReference>
<dbReference type="PROSITE" id="PS00178">
    <property type="entry name" value="AA_TRNA_LIGASE_I"/>
    <property type="match status" value="1"/>
</dbReference>
<feature type="chain" id="PRO_0000334793" description="Leucine--tRNA ligase">
    <location>
        <begin position="1"/>
        <end position="870"/>
    </location>
</feature>
<feature type="short sequence motif" description="'HIGH' region">
    <location>
        <begin position="43"/>
        <end position="53"/>
    </location>
</feature>
<feature type="short sequence motif" description="'KMSKS' region">
    <location>
        <begin position="626"/>
        <end position="630"/>
    </location>
</feature>
<feature type="binding site" evidence="1">
    <location>
        <position position="629"/>
    </location>
    <ligand>
        <name>ATP</name>
        <dbReference type="ChEBI" id="CHEBI:30616"/>
    </ligand>
</feature>